<evidence type="ECO:0000255" key="1">
    <source>
        <dbReference type="HAMAP-Rule" id="MF_01082"/>
    </source>
</evidence>
<dbReference type="EC" id="5.4.99.27" evidence="1"/>
<dbReference type="EMBL" id="CP001139">
    <property type="protein sequence ID" value="ACH66240.1"/>
    <property type="molecule type" value="Genomic_DNA"/>
</dbReference>
<dbReference type="RefSeq" id="WP_012533594.1">
    <property type="nucleotide sequence ID" value="NC_011184.1"/>
</dbReference>
<dbReference type="SMR" id="B5FAF5"/>
<dbReference type="KEGG" id="vfm:VFMJ11_2177"/>
<dbReference type="HOGENOM" id="CLU_005281_4_0_6"/>
<dbReference type="Proteomes" id="UP000001857">
    <property type="component" value="Chromosome I"/>
</dbReference>
<dbReference type="GO" id="GO:0005829">
    <property type="term" value="C:cytosol"/>
    <property type="evidence" value="ECO:0007669"/>
    <property type="project" value="TreeGrafter"/>
</dbReference>
<dbReference type="GO" id="GO:0003723">
    <property type="term" value="F:RNA binding"/>
    <property type="evidence" value="ECO:0007669"/>
    <property type="project" value="InterPro"/>
</dbReference>
<dbReference type="GO" id="GO:0160150">
    <property type="term" value="F:tRNA pseudouridine(13) synthase activity"/>
    <property type="evidence" value="ECO:0007669"/>
    <property type="project" value="UniProtKB-EC"/>
</dbReference>
<dbReference type="GO" id="GO:0031119">
    <property type="term" value="P:tRNA pseudouridine synthesis"/>
    <property type="evidence" value="ECO:0007669"/>
    <property type="project" value="UniProtKB-UniRule"/>
</dbReference>
<dbReference type="CDD" id="cd02575">
    <property type="entry name" value="PseudoU_synth_EcTruD"/>
    <property type="match status" value="1"/>
</dbReference>
<dbReference type="Gene3D" id="3.30.2350.20">
    <property type="entry name" value="TruD, catalytic domain"/>
    <property type="match status" value="1"/>
</dbReference>
<dbReference type="Gene3D" id="3.30.2340.10">
    <property type="entry name" value="TruD, insertion domain"/>
    <property type="match status" value="1"/>
</dbReference>
<dbReference type="HAMAP" id="MF_01082">
    <property type="entry name" value="TruD"/>
    <property type="match status" value="1"/>
</dbReference>
<dbReference type="InterPro" id="IPR020103">
    <property type="entry name" value="PsdUridine_synth_cat_dom_sf"/>
</dbReference>
<dbReference type="InterPro" id="IPR001656">
    <property type="entry name" value="PsdUridine_synth_TruD"/>
</dbReference>
<dbReference type="InterPro" id="IPR020119">
    <property type="entry name" value="PsdUridine_synth_TruD_CS"/>
</dbReference>
<dbReference type="InterPro" id="IPR011760">
    <property type="entry name" value="PsdUridine_synth_TruD_insert"/>
</dbReference>
<dbReference type="InterPro" id="IPR042214">
    <property type="entry name" value="TruD_catalytic"/>
</dbReference>
<dbReference type="InterPro" id="IPR043165">
    <property type="entry name" value="TruD_insert_sf"/>
</dbReference>
<dbReference type="InterPro" id="IPR050170">
    <property type="entry name" value="TruD_pseudoU_synthase"/>
</dbReference>
<dbReference type="NCBIfam" id="NF002155">
    <property type="entry name" value="PRK00984.1-4"/>
    <property type="match status" value="1"/>
</dbReference>
<dbReference type="PANTHER" id="PTHR47811">
    <property type="entry name" value="TRNA PSEUDOURIDINE SYNTHASE D"/>
    <property type="match status" value="1"/>
</dbReference>
<dbReference type="PANTHER" id="PTHR47811:SF1">
    <property type="entry name" value="TRNA PSEUDOURIDINE SYNTHASE D"/>
    <property type="match status" value="1"/>
</dbReference>
<dbReference type="Pfam" id="PF01142">
    <property type="entry name" value="TruD"/>
    <property type="match status" value="2"/>
</dbReference>
<dbReference type="SUPFAM" id="SSF55120">
    <property type="entry name" value="Pseudouridine synthase"/>
    <property type="match status" value="1"/>
</dbReference>
<dbReference type="PROSITE" id="PS50984">
    <property type="entry name" value="TRUD"/>
    <property type="match status" value="1"/>
</dbReference>
<dbReference type="PROSITE" id="PS01268">
    <property type="entry name" value="UPF0024"/>
    <property type="match status" value="1"/>
</dbReference>
<accession>B5FAF5</accession>
<comment type="function">
    <text evidence="1">Responsible for synthesis of pseudouridine from uracil-13 in transfer RNAs.</text>
</comment>
<comment type="catalytic activity">
    <reaction evidence="1">
        <text>uridine(13) in tRNA = pseudouridine(13) in tRNA</text>
        <dbReference type="Rhea" id="RHEA:42540"/>
        <dbReference type="Rhea" id="RHEA-COMP:10105"/>
        <dbReference type="Rhea" id="RHEA-COMP:10106"/>
        <dbReference type="ChEBI" id="CHEBI:65314"/>
        <dbReference type="ChEBI" id="CHEBI:65315"/>
        <dbReference type="EC" id="5.4.99.27"/>
    </reaction>
</comment>
<comment type="similarity">
    <text evidence="1">Belongs to the pseudouridine synthase TruD family.</text>
</comment>
<reference key="1">
    <citation type="submission" date="2008-08" db="EMBL/GenBank/DDBJ databases">
        <title>Complete sequence of Vibrio fischeri strain MJ11.</title>
        <authorList>
            <person name="Mandel M.J."/>
            <person name="Stabb E.V."/>
            <person name="Ruby E.G."/>
            <person name="Ferriera S."/>
            <person name="Johnson J."/>
            <person name="Kravitz S."/>
            <person name="Beeson K."/>
            <person name="Sutton G."/>
            <person name="Rogers Y.-H."/>
            <person name="Friedman R."/>
            <person name="Frazier M."/>
            <person name="Venter J.C."/>
        </authorList>
    </citation>
    <scope>NUCLEOTIDE SEQUENCE [LARGE SCALE GENOMIC DNA]</scope>
    <source>
        <strain>MJ11</strain>
    </source>
</reference>
<gene>
    <name evidence="1" type="primary">truD</name>
    <name type="ordered locus">VFMJ11_2177</name>
</gene>
<proteinExistence type="inferred from homology"/>
<sequence length="351" mass="39599">MSDIMSNFSWLYGKPVATGKLKQLPEHFIVKEILGFEFTGSGEHLMVKIRKTGENTKYVANELAKFCGVKSKNVSWAGLKDRHAVTEQWLSVQVANSDELSFAKFEATHPGVEILEVTRHNKKLRPGDLQGNQFQVIATEVTDIEDVLARLEKVKLTGVPNYFGSQRFGHEGNNVNEARRWGRDNVRTRDNSKRSFYLSAARSWIFNHIVSQRITEGYFSQPVDGDILLDRNDRIVNENVTSEESIQKIQNGELSITAALAGDNQLPTTGTALTLEQPHLDAEPDLMALIRGNRMRHERRAIELHPENLTWSAEGDTLTLNFSLTSGSFATVIVRELLQEIEVERTYSSND</sequence>
<organism>
    <name type="scientific">Aliivibrio fischeri (strain MJ11)</name>
    <name type="common">Vibrio fischeri</name>
    <dbReference type="NCBI Taxonomy" id="388396"/>
    <lineage>
        <taxon>Bacteria</taxon>
        <taxon>Pseudomonadati</taxon>
        <taxon>Pseudomonadota</taxon>
        <taxon>Gammaproteobacteria</taxon>
        <taxon>Vibrionales</taxon>
        <taxon>Vibrionaceae</taxon>
        <taxon>Aliivibrio</taxon>
    </lineage>
</organism>
<name>TRUD_ALIFM</name>
<protein>
    <recommendedName>
        <fullName evidence="1">tRNA pseudouridine synthase D</fullName>
        <ecNumber evidence="1">5.4.99.27</ecNumber>
    </recommendedName>
    <alternativeName>
        <fullName evidence="1">tRNA pseudouridine(13) synthase</fullName>
    </alternativeName>
    <alternativeName>
        <fullName evidence="1">tRNA pseudouridylate synthase D</fullName>
    </alternativeName>
    <alternativeName>
        <fullName evidence="1">tRNA-uridine isomerase D</fullName>
    </alternativeName>
</protein>
<feature type="chain" id="PRO_1000136858" description="tRNA pseudouridine synthase D">
    <location>
        <begin position="1"/>
        <end position="351"/>
    </location>
</feature>
<feature type="domain" description="TRUD" evidence="1">
    <location>
        <begin position="158"/>
        <end position="304"/>
    </location>
</feature>
<feature type="active site" description="Nucleophile" evidence="1">
    <location>
        <position position="81"/>
    </location>
</feature>
<keyword id="KW-0413">Isomerase</keyword>
<keyword id="KW-0819">tRNA processing</keyword>